<keyword id="KW-0053">Apoptosis</keyword>
<keyword id="KW-0067">ATP-binding</keyword>
<keyword id="KW-1003">Cell membrane</keyword>
<keyword id="KW-1015">Disulfide bond</keyword>
<keyword id="KW-0325">Glycoprotein</keyword>
<keyword id="KW-0393">Immunoglobulin domain</keyword>
<keyword id="KW-0418">Kinase</keyword>
<keyword id="KW-0472">Membrane</keyword>
<keyword id="KW-0547">Nucleotide-binding</keyword>
<keyword id="KW-0597">Phosphoprotein</keyword>
<keyword id="KW-0675">Receptor</keyword>
<keyword id="KW-1185">Reference proteome</keyword>
<keyword id="KW-0677">Repeat</keyword>
<keyword id="KW-0732">Signal</keyword>
<keyword id="KW-0808">Transferase</keyword>
<keyword id="KW-0812">Transmembrane</keyword>
<keyword id="KW-1133">Transmembrane helix</keyword>
<keyword id="KW-0829">Tyrosine-protein kinase</keyword>
<sequence length="800" mass="89716">MVPLCLLLYLATLVFPPVYSAHLLSPEPTDWVSSEVEVFLEDYVAGVGDTVVLSCTPQDFLLPIVWQKDGDAVSSSNRTRVGQKALRIINVSYEDSGVYSCRHAHKSMLLSNYTVKVIDSLSSGDDEDYDEDEDEAGNGNAEAPYWTRSDRMEKKLLAVPAANTVKFRCPAAGNPTPSIHWLKNGKEFKGEQRMGGIKLRHQQWSLVMESAVPSDRGNYTCVVQNKYGSIKHTYQLDVLERSPHRPILQAGLPANQTVVVGSDVEFHCKVYSDAQPHIQWLKHIEVNGSQYGPNGAPYVNVLKTAGINTTDKELEILYLTNVSFEDAGQYTCLAGNSIGYNHHSAWLTVLPAVEMEREDDYADILIYVTSCVLFILTMVIIILCRMWINTQKTLPAPPVQKLSKFPLKRQVSLESNSSMNSNTPLVRIARLSSSDGPMLPNVSELELPSDPKWEFTRTKLTLGKPLGEGCFGQVVMAEAIGIDKEKPNKPLTVAVKMLKDDGTDKDLSDLVSEMEMMKMIGKHKNIINLLGACTQDGPLYVLVEYASKGNLREYLRARRPPGMDYSFDTCKIPNETLTFKDLVSCAYQVARGMEYLASKKCIHRDPAARNVLVTEDNVMKIADFGLARDVHNIDYYKKTTNGRLPVKWMAPEALFDRVYTHQSDVWSYGVLLWEIFTLGGSPYPGIPVEELFKLLKEGHRMDKPANCTHELYMIMRECWHAVPSQRPTFRQLVEDHDRVLSMTSTDEYLDLSVPFEQYSPTCPDSNSTCSSGDDSVFAHDPLPEEPCLPKHHHSNGVIRT</sequence>
<dbReference type="EC" id="2.7.10.1"/>
<dbReference type="EMBL" id="AF157560">
    <property type="protein sequence ID" value="AAF80344.1"/>
    <property type="molecule type" value="mRNA"/>
</dbReference>
<dbReference type="SMR" id="Q9I8X3"/>
<dbReference type="FunCoup" id="Q9I8X3">
    <property type="interactions" value="720"/>
</dbReference>
<dbReference type="STRING" id="7955.ENSDARP00000011898"/>
<dbReference type="GlyCosmos" id="Q9I8X3">
    <property type="glycosylation" value="8 sites, No reported glycans"/>
</dbReference>
<dbReference type="AGR" id="ZFIN:ZDB-GENE-000816-1"/>
<dbReference type="ZFIN" id="ZDB-GENE-000816-1">
    <property type="gene designation" value="fgfr3"/>
</dbReference>
<dbReference type="InParanoid" id="Q9I8X3"/>
<dbReference type="Reactome" id="R-DRE-190371">
    <property type="pathway name" value="FGFR3b ligand binding and activation"/>
</dbReference>
<dbReference type="Reactome" id="R-DRE-190372">
    <property type="pathway name" value="FGFR3c ligand binding and activation"/>
</dbReference>
<dbReference type="Reactome" id="R-DRE-5654227">
    <property type="pathway name" value="Phospholipase C-mediated cascade, FGFR3"/>
</dbReference>
<dbReference type="Reactome" id="R-DRE-5654704">
    <property type="pathway name" value="SHC-mediated cascade:FGFR3"/>
</dbReference>
<dbReference type="Reactome" id="R-DRE-5654706">
    <property type="pathway name" value="FRS-mediated FGFR3 signaling"/>
</dbReference>
<dbReference type="Reactome" id="R-DRE-5673001">
    <property type="pathway name" value="RAF/MAP kinase cascade"/>
</dbReference>
<dbReference type="SignaLink" id="Q9I8X3"/>
<dbReference type="PRO" id="PR:Q9I8X3"/>
<dbReference type="Proteomes" id="UP000000437">
    <property type="component" value="Unplaced"/>
</dbReference>
<dbReference type="GO" id="GO:0005886">
    <property type="term" value="C:plasma membrane"/>
    <property type="evidence" value="ECO:0000318"/>
    <property type="project" value="GO_Central"/>
</dbReference>
<dbReference type="GO" id="GO:0043235">
    <property type="term" value="C:receptor complex"/>
    <property type="evidence" value="ECO:0000318"/>
    <property type="project" value="GO_Central"/>
</dbReference>
<dbReference type="GO" id="GO:0005524">
    <property type="term" value="F:ATP binding"/>
    <property type="evidence" value="ECO:0007669"/>
    <property type="project" value="UniProtKB-KW"/>
</dbReference>
<dbReference type="GO" id="GO:0017134">
    <property type="term" value="F:fibroblast growth factor binding"/>
    <property type="evidence" value="ECO:0000318"/>
    <property type="project" value="GO_Central"/>
</dbReference>
<dbReference type="GO" id="GO:0005007">
    <property type="term" value="F:fibroblast growth factor receptor activity"/>
    <property type="evidence" value="ECO:0000318"/>
    <property type="project" value="GO_Central"/>
</dbReference>
<dbReference type="GO" id="GO:0006915">
    <property type="term" value="P:apoptotic process"/>
    <property type="evidence" value="ECO:0007669"/>
    <property type="project" value="UniProtKB-KW"/>
</dbReference>
<dbReference type="GO" id="GO:0008543">
    <property type="term" value="P:fibroblast growth factor receptor signaling pathway"/>
    <property type="evidence" value="ECO:0000318"/>
    <property type="project" value="GO_Central"/>
</dbReference>
<dbReference type="GO" id="GO:0008284">
    <property type="term" value="P:positive regulation of cell population proliferation"/>
    <property type="evidence" value="ECO:0000318"/>
    <property type="project" value="GO_Central"/>
</dbReference>
<dbReference type="GO" id="GO:0043410">
    <property type="term" value="P:positive regulation of MAPK cascade"/>
    <property type="evidence" value="ECO:0000318"/>
    <property type="project" value="GO_Central"/>
</dbReference>
<dbReference type="GO" id="GO:1902036">
    <property type="term" value="P:regulation of hematopoietic stem cell differentiation"/>
    <property type="evidence" value="ECO:0000315"/>
    <property type="project" value="ZFIN"/>
</dbReference>
<dbReference type="CDD" id="cd05857">
    <property type="entry name" value="IgI_2_FGFR"/>
    <property type="match status" value="1"/>
</dbReference>
<dbReference type="CDD" id="cd05100">
    <property type="entry name" value="PTKc_FGFR3"/>
    <property type="match status" value="1"/>
</dbReference>
<dbReference type="FunFam" id="1.10.510.10:FF:000007">
    <property type="entry name" value="Fibroblast growth factor receptor"/>
    <property type="match status" value="1"/>
</dbReference>
<dbReference type="FunFam" id="2.60.40.10:FF:000016">
    <property type="entry name" value="Fibroblast growth factor receptor"/>
    <property type="match status" value="1"/>
</dbReference>
<dbReference type="FunFam" id="2.60.40.10:FF:000020">
    <property type="entry name" value="Fibroblast growth factor receptor"/>
    <property type="match status" value="1"/>
</dbReference>
<dbReference type="FunFam" id="2.60.40.10:FF:000423">
    <property type="entry name" value="Fibroblast growth factor receptor"/>
    <property type="match status" value="1"/>
</dbReference>
<dbReference type="FunFam" id="3.30.200.20:FF:000011">
    <property type="entry name" value="Fibroblast growth factor receptor"/>
    <property type="match status" value="1"/>
</dbReference>
<dbReference type="Gene3D" id="6.10.250.1740">
    <property type="match status" value="1"/>
</dbReference>
<dbReference type="Gene3D" id="2.60.40.10">
    <property type="entry name" value="Immunoglobulins"/>
    <property type="match status" value="3"/>
</dbReference>
<dbReference type="Gene3D" id="3.30.200.20">
    <property type="entry name" value="Phosphorylase Kinase, domain 1"/>
    <property type="match status" value="1"/>
</dbReference>
<dbReference type="Gene3D" id="1.10.510.10">
    <property type="entry name" value="Transferase(Phosphotransferase) domain 1"/>
    <property type="match status" value="1"/>
</dbReference>
<dbReference type="InterPro" id="IPR016248">
    <property type="entry name" value="FGF_rcpt_fam"/>
</dbReference>
<dbReference type="InterPro" id="IPR007110">
    <property type="entry name" value="Ig-like_dom"/>
</dbReference>
<dbReference type="InterPro" id="IPR036179">
    <property type="entry name" value="Ig-like_dom_sf"/>
</dbReference>
<dbReference type="InterPro" id="IPR013783">
    <property type="entry name" value="Ig-like_fold"/>
</dbReference>
<dbReference type="InterPro" id="IPR013098">
    <property type="entry name" value="Ig_I-set"/>
</dbReference>
<dbReference type="InterPro" id="IPR003599">
    <property type="entry name" value="Ig_sub"/>
</dbReference>
<dbReference type="InterPro" id="IPR003598">
    <property type="entry name" value="Ig_sub2"/>
</dbReference>
<dbReference type="InterPro" id="IPR013151">
    <property type="entry name" value="Immunoglobulin_dom"/>
</dbReference>
<dbReference type="InterPro" id="IPR011009">
    <property type="entry name" value="Kinase-like_dom_sf"/>
</dbReference>
<dbReference type="InterPro" id="IPR000719">
    <property type="entry name" value="Prot_kinase_dom"/>
</dbReference>
<dbReference type="InterPro" id="IPR017441">
    <property type="entry name" value="Protein_kinase_ATP_BS"/>
</dbReference>
<dbReference type="InterPro" id="IPR050122">
    <property type="entry name" value="RTK"/>
</dbReference>
<dbReference type="InterPro" id="IPR001245">
    <property type="entry name" value="Ser-Thr/Tyr_kinase_cat_dom"/>
</dbReference>
<dbReference type="PANTHER" id="PTHR24416:SF505">
    <property type="entry name" value="FIBROBLAST GROWTH FACTOR RECEPTOR 3"/>
    <property type="match status" value="1"/>
</dbReference>
<dbReference type="PANTHER" id="PTHR24416">
    <property type="entry name" value="TYROSINE-PROTEIN KINASE RECEPTOR"/>
    <property type="match status" value="1"/>
</dbReference>
<dbReference type="Pfam" id="PF07679">
    <property type="entry name" value="I-set"/>
    <property type="match status" value="2"/>
</dbReference>
<dbReference type="Pfam" id="PF00047">
    <property type="entry name" value="ig"/>
    <property type="match status" value="1"/>
</dbReference>
<dbReference type="Pfam" id="PF07714">
    <property type="entry name" value="PK_Tyr_Ser-Thr"/>
    <property type="match status" value="1"/>
</dbReference>
<dbReference type="PIRSF" id="PIRSF000628">
    <property type="entry name" value="FGFR"/>
    <property type="match status" value="1"/>
</dbReference>
<dbReference type="PRINTS" id="PR00109">
    <property type="entry name" value="TYRKINASE"/>
</dbReference>
<dbReference type="SMART" id="SM00409">
    <property type="entry name" value="IG"/>
    <property type="match status" value="3"/>
</dbReference>
<dbReference type="SMART" id="SM00408">
    <property type="entry name" value="IGc2"/>
    <property type="match status" value="3"/>
</dbReference>
<dbReference type="SUPFAM" id="SSF48726">
    <property type="entry name" value="Immunoglobulin"/>
    <property type="match status" value="3"/>
</dbReference>
<dbReference type="SUPFAM" id="SSF56112">
    <property type="entry name" value="Protein kinase-like (PK-like)"/>
    <property type="match status" value="1"/>
</dbReference>
<dbReference type="PROSITE" id="PS50835">
    <property type="entry name" value="IG_LIKE"/>
    <property type="match status" value="3"/>
</dbReference>
<dbReference type="PROSITE" id="PS00107">
    <property type="entry name" value="PROTEIN_KINASE_ATP"/>
    <property type="match status" value="1"/>
</dbReference>
<dbReference type="PROSITE" id="PS50011">
    <property type="entry name" value="PROTEIN_KINASE_DOM"/>
    <property type="match status" value="1"/>
</dbReference>
<comment type="function">
    <text evidence="1">Tyrosine-protein kinase that acts as a cell-surface receptor for fibroblast growth factors and plays an essential role in the regulation of cell proliferation, differentiation and apoptosis. Plays an essential role in the regulation of chondrocyte differentiation, proliferation and apoptosis, and is required for normal skeleton development. Regulates both osteogenesis and postnatal bone mineralization by osteoblasts. Promotes apoptosis in chondrocytes, but can also promote cancer cell proliferation. Phosphorylates PLCG1, CBL and FRS2. Ligand binding leads to the activation of several signaling cascades. Activation of PLCG1 leads to the production of the cellular signaling molecules diacylglycerol and inositol 1,4,5-trisphosphate. Phosphorylation of FRS2 triggers recruitment of GRB2, GAB1, PIK3R1 and SOS1, and mediates activation of RAS, MAPK1/ERK2, MAPK3/ERK1 and the MAP kinase signaling pathway, as well as of the AKT1 signaling pathway (By similarity).</text>
</comment>
<comment type="catalytic activity">
    <reaction>
        <text>L-tyrosyl-[protein] + ATP = O-phospho-L-tyrosyl-[protein] + ADP + H(+)</text>
        <dbReference type="Rhea" id="RHEA:10596"/>
        <dbReference type="Rhea" id="RHEA-COMP:10136"/>
        <dbReference type="Rhea" id="RHEA-COMP:20101"/>
        <dbReference type="ChEBI" id="CHEBI:15378"/>
        <dbReference type="ChEBI" id="CHEBI:30616"/>
        <dbReference type="ChEBI" id="CHEBI:46858"/>
        <dbReference type="ChEBI" id="CHEBI:61978"/>
        <dbReference type="ChEBI" id="CHEBI:456216"/>
        <dbReference type="EC" id="2.7.10.1"/>
    </reaction>
</comment>
<comment type="activity regulation">
    <text evidence="1">Present in an inactive conformation in the absence of bound ligand. Ligand binding leads to dimerization and activation by autophosphorylation on tyrosine residues (By similarity).</text>
</comment>
<comment type="subunit">
    <text evidence="1">Monomer. Homodimer after ligand binding (By similarity).</text>
</comment>
<comment type="subcellular location">
    <subcellularLocation>
        <location evidence="1">Cell membrane</location>
        <topology evidence="1">Single-pass type I membrane protein</topology>
    </subcellularLocation>
</comment>
<comment type="developmental stage">
    <text evidence="6">Expression occurs in the axial mesoderm, the diencephalon, the anterior hindbrain and the anterior spinal cord. In the hindbrain, a differential expression was detected at several levels of intensity, with the highest expression in the posterior rhombomere 1 that is morphologically distinct from the anterior part, which develops into the cerebellum.</text>
</comment>
<comment type="domain">
    <text evidence="1">The second and third Ig-like domains directly interact with fibroblast growth factors (FGF) and heparan sulfate proteoglycans.</text>
</comment>
<comment type="PTM">
    <text evidence="1">Autophosphorylated. Binding of FGF family members together with heparan sulfate proteoglycan or heparin promotes receptor dimerization and autophosphorylation on tyrosine residues. Autophosphorylation occurs in trans between the two FGFR molecules present in the dimer (By similarity).</text>
</comment>
<comment type="similarity">
    <text evidence="4">Belongs to the protein kinase superfamily. Tyr protein kinase family. Fibroblast growth factor receptor subfamily.</text>
</comment>
<protein>
    <recommendedName>
        <fullName>Fibroblast growth factor receptor 3</fullName>
        <shortName>FGFR-3</shortName>
        <ecNumber>2.7.10.1</ecNumber>
    </recommendedName>
</protein>
<evidence type="ECO:0000250" key="1"/>
<evidence type="ECO:0000255" key="2"/>
<evidence type="ECO:0000255" key="3">
    <source>
        <dbReference type="PROSITE-ProRule" id="PRU00114"/>
    </source>
</evidence>
<evidence type="ECO:0000255" key="4">
    <source>
        <dbReference type="PROSITE-ProRule" id="PRU00159"/>
    </source>
</evidence>
<evidence type="ECO:0000256" key="5">
    <source>
        <dbReference type="SAM" id="MobiDB-lite"/>
    </source>
</evidence>
<evidence type="ECO:0000269" key="6">
    <source>
    </source>
</evidence>
<feature type="signal peptide" evidence="2">
    <location>
        <begin position="1"/>
        <end position="20"/>
    </location>
</feature>
<feature type="chain" id="PRO_0000249205" description="Fibroblast growth factor receptor 3">
    <location>
        <begin position="21"/>
        <end position="800"/>
    </location>
</feature>
<feature type="topological domain" description="Extracellular" evidence="2">
    <location>
        <begin position="21"/>
        <end position="363"/>
    </location>
</feature>
<feature type="transmembrane region" description="Helical" evidence="2">
    <location>
        <begin position="364"/>
        <end position="384"/>
    </location>
</feature>
<feature type="topological domain" description="Cytoplasmic" evidence="2">
    <location>
        <begin position="385"/>
        <end position="800"/>
    </location>
</feature>
<feature type="domain" description="Ig-like C2-type 1">
    <location>
        <begin position="21"/>
        <end position="122"/>
    </location>
</feature>
<feature type="domain" description="Ig-like C2-type 2">
    <location>
        <begin position="144"/>
        <end position="237"/>
    </location>
</feature>
<feature type="domain" description="Ig-like C2-type 3">
    <location>
        <begin position="246"/>
        <end position="348"/>
    </location>
</feature>
<feature type="domain" description="Protein kinase" evidence="4">
    <location>
        <begin position="460"/>
        <end position="739"/>
    </location>
</feature>
<feature type="region of interest" description="Disordered" evidence="5">
    <location>
        <begin position="124"/>
        <end position="143"/>
    </location>
</feature>
<feature type="region of interest" description="Disordered" evidence="5">
    <location>
        <begin position="764"/>
        <end position="800"/>
    </location>
</feature>
<feature type="compositionally biased region" description="Acidic residues" evidence="5">
    <location>
        <begin position="124"/>
        <end position="136"/>
    </location>
</feature>
<feature type="compositionally biased region" description="Polar residues" evidence="5">
    <location>
        <begin position="764"/>
        <end position="773"/>
    </location>
</feature>
<feature type="active site" description="Proton acceptor" evidence="4">
    <location>
        <position position="605"/>
    </location>
</feature>
<feature type="binding site" evidence="4">
    <location>
        <begin position="466"/>
        <end position="474"/>
    </location>
    <ligand>
        <name>ATP</name>
        <dbReference type="ChEBI" id="CHEBI:30616"/>
    </ligand>
</feature>
<feature type="binding site" evidence="4">
    <location>
        <position position="496"/>
    </location>
    <ligand>
        <name>ATP</name>
        <dbReference type="ChEBI" id="CHEBI:30616"/>
    </ligand>
</feature>
<feature type="modified residue" description="Phosphotyrosine; by autocatalysis" evidence="1">
    <location>
        <position position="635"/>
    </location>
</feature>
<feature type="modified residue" description="Phosphotyrosine; by autocatalysis" evidence="1">
    <location>
        <position position="636"/>
    </location>
</feature>
<feature type="modified residue" description="Phosphotyrosine; by autocatalysis" evidence="1">
    <location>
        <position position="712"/>
    </location>
</feature>
<feature type="modified residue" description="Phosphotyrosine; by autocatalysis" evidence="1">
    <location>
        <position position="748"/>
    </location>
</feature>
<feature type="glycosylation site" description="N-linked (GlcNAc...) asparagine" evidence="2">
    <location>
        <position position="77"/>
    </location>
</feature>
<feature type="glycosylation site" description="N-linked (GlcNAc...) asparagine" evidence="2">
    <location>
        <position position="90"/>
    </location>
</feature>
<feature type="glycosylation site" description="N-linked (GlcNAc...) asparagine" evidence="2">
    <location>
        <position position="112"/>
    </location>
</feature>
<feature type="glycosylation site" description="N-linked (GlcNAc...) asparagine" evidence="2">
    <location>
        <position position="218"/>
    </location>
</feature>
<feature type="glycosylation site" description="N-linked (GlcNAc...) asparagine" evidence="2">
    <location>
        <position position="255"/>
    </location>
</feature>
<feature type="glycosylation site" description="N-linked (GlcNAc...) asparagine" evidence="2">
    <location>
        <position position="287"/>
    </location>
</feature>
<feature type="glycosylation site" description="N-linked (GlcNAc...) asparagine" evidence="2">
    <location>
        <position position="308"/>
    </location>
</feature>
<feature type="glycosylation site" description="N-linked (GlcNAc...) asparagine" evidence="2">
    <location>
        <position position="321"/>
    </location>
</feature>
<feature type="disulfide bond" evidence="3">
    <location>
        <begin position="55"/>
        <end position="101"/>
    </location>
</feature>
<feature type="disulfide bond" evidence="3">
    <location>
        <begin position="169"/>
        <end position="221"/>
    </location>
</feature>
<feature type="disulfide bond" evidence="3">
    <location>
        <begin position="268"/>
        <end position="332"/>
    </location>
</feature>
<organism>
    <name type="scientific">Danio rerio</name>
    <name type="common">Zebrafish</name>
    <name type="synonym">Brachydanio rerio</name>
    <dbReference type="NCBI Taxonomy" id="7955"/>
    <lineage>
        <taxon>Eukaryota</taxon>
        <taxon>Metazoa</taxon>
        <taxon>Chordata</taxon>
        <taxon>Craniata</taxon>
        <taxon>Vertebrata</taxon>
        <taxon>Euteleostomi</taxon>
        <taxon>Actinopterygii</taxon>
        <taxon>Neopterygii</taxon>
        <taxon>Teleostei</taxon>
        <taxon>Ostariophysi</taxon>
        <taxon>Cypriniformes</taxon>
        <taxon>Danionidae</taxon>
        <taxon>Danioninae</taxon>
        <taxon>Danio</taxon>
    </lineage>
</organism>
<name>FGFR3_DANRE</name>
<accession>Q9I8X3</accession>
<gene>
    <name type="primary">fgfr3</name>
</gene>
<proteinExistence type="evidence at transcript level"/>
<reference key="1">
    <citation type="journal article" date="2001" name="Mech. Dev.">
        <title>fgfr3 and regionalization of anterior neural tube in zebrafish.</title>
        <authorList>
            <person name="Sleptsova-Friedrich I."/>
            <person name="Li Y."/>
            <person name="Emelyanov A."/>
            <person name="Ekker M."/>
            <person name="Korzh V."/>
            <person name="Ge R."/>
        </authorList>
    </citation>
    <scope>NUCLEOTIDE SEQUENCE [MRNA]</scope>
    <scope>DEVELOPMENTAL STAGE</scope>
</reference>